<comment type="cofactor">
    <cofactor evidence="1">
        <name>Ca(2+)</name>
        <dbReference type="ChEBI" id="CHEBI:29108"/>
    </cofactor>
    <text evidence="1">Binds 2 calcium ions per subunit.</text>
</comment>
<comment type="subunit">
    <text>Homopentamer. Pentraxin (or pentaxin) have a discoid arrangement of 5 non-covalently bound subunits.</text>
</comment>
<comment type="subcellular location">
    <subcellularLocation>
        <location>Secreted</location>
    </subcellularLocation>
</comment>
<comment type="disease">
    <text>SAP is a precursor of amyloid component P which is found in basement membrane and associated with amyloid deposits.</text>
</comment>
<comment type="similarity">
    <text evidence="4">Belongs to the pentraxin family.</text>
</comment>
<dbReference type="EMBL" id="AB005546">
    <property type="protein sequence ID" value="BAA21474.1"/>
    <property type="molecule type" value="mRNA"/>
</dbReference>
<dbReference type="RefSeq" id="NP_999052.1">
    <property type="nucleotide sequence ID" value="NM_213887.1"/>
</dbReference>
<dbReference type="SMR" id="O19063"/>
<dbReference type="FunCoup" id="O19063">
    <property type="interactions" value="249"/>
</dbReference>
<dbReference type="STRING" id="9823.ENSSSCP00000035458"/>
<dbReference type="GlyCosmos" id="O19063">
    <property type="glycosylation" value="1 site, No reported glycans"/>
</dbReference>
<dbReference type="GlyGen" id="O19063">
    <property type="glycosylation" value="1 site"/>
</dbReference>
<dbReference type="PeptideAtlas" id="O19063"/>
<dbReference type="Ensembl" id="ENSSSCT00000044230.3">
    <property type="protein sequence ID" value="ENSSSCP00000035458.1"/>
    <property type="gene ID" value="ENSSSCG00000037268.3"/>
</dbReference>
<dbReference type="Ensembl" id="ENSSSCT00025007433.1">
    <property type="protein sequence ID" value="ENSSSCP00025003025.1"/>
    <property type="gene ID" value="ENSSSCG00025005551.1"/>
</dbReference>
<dbReference type="Ensembl" id="ENSSSCT00035029252.1">
    <property type="protein sequence ID" value="ENSSSCP00035011297.1"/>
    <property type="gene ID" value="ENSSSCG00035022411.1"/>
</dbReference>
<dbReference type="Ensembl" id="ENSSSCT00045006466.1">
    <property type="protein sequence ID" value="ENSSSCP00045004397.1"/>
    <property type="gene ID" value="ENSSSCG00045003904.1"/>
</dbReference>
<dbReference type="Ensembl" id="ENSSSCT00055055822.1">
    <property type="protein sequence ID" value="ENSSSCP00055044564.1"/>
    <property type="gene ID" value="ENSSSCG00055028179.1"/>
</dbReference>
<dbReference type="Ensembl" id="ENSSSCT00070054127.1">
    <property type="protein sequence ID" value="ENSSSCP00070045888.1"/>
    <property type="gene ID" value="ENSSSCG00070026993.1"/>
</dbReference>
<dbReference type="Ensembl" id="ENSSSCT00085048484">
    <property type="protein sequence ID" value="ENSSSCP00085033908"/>
    <property type="gene ID" value="ENSSSCG00085025261"/>
</dbReference>
<dbReference type="Ensembl" id="ENSSSCT00105029574">
    <property type="protein sequence ID" value="ENSSSCP00105020560"/>
    <property type="gene ID" value="ENSSSCG00105015361"/>
</dbReference>
<dbReference type="Ensembl" id="ENSSSCT00110075781">
    <property type="protein sequence ID" value="ENSSSCP00110053452"/>
    <property type="gene ID" value="ENSSSCG00110039730"/>
</dbReference>
<dbReference type="Ensembl" id="ENSSSCT00115036234">
    <property type="protein sequence ID" value="ENSSSCP00115034314"/>
    <property type="gene ID" value="ENSSSCG00115020465"/>
</dbReference>
<dbReference type="GeneID" id="396921"/>
<dbReference type="KEGG" id="ssc:396921"/>
<dbReference type="CTD" id="325"/>
<dbReference type="VGNC" id="VGNC:85407">
    <property type="gene designation" value="APCS"/>
</dbReference>
<dbReference type="GeneTree" id="ENSGT01100000263515"/>
<dbReference type="InParanoid" id="O19063"/>
<dbReference type="OMA" id="NPNILDW"/>
<dbReference type="OrthoDB" id="547680at2759"/>
<dbReference type="Proteomes" id="UP000008227">
    <property type="component" value="Chromosome 4"/>
</dbReference>
<dbReference type="Proteomes" id="UP000314985">
    <property type="component" value="Chromosome 4"/>
</dbReference>
<dbReference type="Proteomes" id="UP000694570">
    <property type="component" value="Unplaced"/>
</dbReference>
<dbReference type="Proteomes" id="UP000694571">
    <property type="component" value="Unplaced"/>
</dbReference>
<dbReference type="Proteomes" id="UP000694720">
    <property type="component" value="Unplaced"/>
</dbReference>
<dbReference type="Proteomes" id="UP000694722">
    <property type="component" value="Unplaced"/>
</dbReference>
<dbReference type="Proteomes" id="UP000694723">
    <property type="component" value="Unplaced"/>
</dbReference>
<dbReference type="Proteomes" id="UP000694724">
    <property type="component" value="Unplaced"/>
</dbReference>
<dbReference type="Proteomes" id="UP000694725">
    <property type="component" value="Unplaced"/>
</dbReference>
<dbReference type="Proteomes" id="UP000694726">
    <property type="component" value="Unplaced"/>
</dbReference>
<dbReference type="Proteomes" id="UP000694727">
    <property type="component" value="Unplaced"/>
</dbReference>
<dbReference type="Proteomes" id="UP000694728">
    <property type="component" value="Unplaced"/>
</dbReference>
<dbReference type="Bgee" id="ENSSSCG00000037268">
    <property type="expression patterns" value="Expressed in liver and 13 other cell types or tissues"/>
</dbReference>
<dbReference type="GO" id="GO:0005615">
    <property type="term" value="C:extracellular space"/>
    <property type="evidence" value="ECO:0000318"/>
    <property type="project" value="GO_Central"/>
</dbReference>
<dbReference type="GO" id="GO:0005509">
    <property type="term" value="F:calcium ion binding"/>
    <property type="evidence" value="ECO:0007669"/>
    <property type="project" value="Ensembl"/>
</dbReference>
<dbReference type="GO" id="GO:0030246">
    <property type="term" value="F:carbohydrate binding"/>
    <property type="evidence" value="ECO:0007669"/>
    <property type="project" value="UniProtKB-KW"/>
</dbReference>
<dbReference type="GO" id="GO:0001849">
    <property type="term" value="F:complement component C1q complex binding"/>
    <property type="evidence" value="ECO:0000318"/>
    <property type="project" value="GO_Central"/>
</dbReference>
<dbReference type="GO" id="GO:0042802">
    <property type="term" value="F:identical protein binding"/>
    <property type="evidence" value="ECO:0007669"/>
    <property type="project" value="Ensembl"/>
</dbReference>
<dbReference type="GO" id="GO:0046790">
    <property type="term" value="F:virion binding"/>
    <property type="evidence" value="ECO:0007669"/>
    <property type="project" value="Ensembl"/>
</dbReference>
<dbReference type="GO" id="GO:0046597">
    <property type="term" value="P:host-mediated suppression of symbiont invasion"/>
    <property type="evidence" value="ECO:0007669"/>
    <property type="project" value="Ensembl"/>
</dbReference>
<dbReference type="GO" id="GO:0045087">
    <property type="term" value="P:innate immune response"/>
    <property type="evidence" value="ECO:0000318"/>
    <property type="project" value="GO_Central"/>
</dbReference>
<dbReference type="GO" id="GO:0044871">
    <property type="term" value="P:negative regulation by host of viral glycoprotein metabolic process"/>
    <property type="evidence" value="ECO:0007669"/>
    <property type="project" value="Ensembl"/>
</dbReference>
<dbReference type="GO" id="GO:0045656">
    <property type="term" value="P:negative regulation of monocyte differentiation"/>
    <property type="evidence" value="ECO:0007669"/>
    <property type="project" value="Ensembl"/>
</dbReference>
<dbReference type="CDD" id="cd00152">
    <property type="entry name" value="PTX"/>
    <property type="match status" value="1"/>
</dbReference>
<dbReference type="FunFam" id="2.60.120.200:FF:000070">
    <property type="entry name" value="Serum amyloid P-component"/>
    <property type="match status" value="1"/>
</dbReference>
<dbReference type="Gene3D" id="2.60.120.200">
    <property type="match status" value="1"/>
</dbReference>
<dbReference type="InterPro" id="IPR013320">
    <property type="entry name" value="ConA-like_dom_sf"/>
</dbReference>
<dbReference type="InterPro" id="IPR030476">
    <property type="entry name" value="Pentaxin_CS"/>
</dbReference>
<dbReference type="InterPro" id="IPR001759">
    <property type="entry name" value="Pentraxin-related"/>
</dbReference>
<dbReference type="InterPro" id="IPR051005">
    <property type="entry name" value="Pentraxin_domain"/>
</dbReference>
<dbReference type="PANTHER" id="PTHR45869">
    <property type="entry name" value="C-REACTIVE PROTEIN-RELATED"/>
    <property type="match status" value="1"/>
</dbReference>
<dbReference type="PANTHER" id="PTHR45869:SF5">
    <property type="entry name" value="SERUM AMYLOID P-COMPONENT"/>
    <property type="match status" value="1"/>
</dbReference>
<dbReference type="Pfam" id="PF00354">
    <property type="entry name" value="Pentaxin"/>
    <property type="match status" value="1"/>
</dbReference>
<dbReference type="PRINTS" id="PR00895">
    <property type="entry name" value="PENTAXIN"/>
</dbReference>
<dbReference type="SMART" id="SM00159">
    <property type="entry name" value="PTX"/>
    <property type="match status" value="1"/>
</dbReference>
<dbReference type="SUPFAM" id="SSF49899">
    <property type="entry name" value="Concanavalin A-like lectins/glucanases"/>
    <property type="match status" value="1"/>
</dbReference>
<dbReference type="PROSITE" id="PS00289">
    <property type="entry name" value="PTX_1"/>
    <property type="match status" value="1"/>
</dbReference>
<dbReference type="PROSITE" id="PS51828">
    <property type="entry name" value="PTX_2"/>
    <property type="match status" value="1"/>
</dbReference>
<proteinExistence type="evidence at transcript level"/>
<accession>O19063</accession>
<reference key="1">
    <citation type="submission" date="1997-07" db="EMBL/GenBank/DDBJ databases">
        <title>Complementary DNA sequence of porcine serum amyloid P component (SAP).</title>
        <authorList>
            <person name="Ozawa A."/>
            <person name="Matsumoto M."/>
            <person name="Kajikawa M."/>
            <person name="Hanazono M."/>
            <person name="Yasue H."/>
        </authorList>
    </citation>
    <scope>NUCLEOTIDE SEQUENCE [MRNA]</scope>
    <source>
        <strain>Landrace</strain>
        <tissue>Liver</tissue>
    </source>
</reference>
<evidence type="ECO:0000250" key="1"/>
<evidence type="ECO:0000255" key="2"/>
<evidence type="ECO:0000255" key="3">
    <source>
        <dbReference type="PROSITE-ProRule" id="PRU01172"/>
    </source>
</evidence>
<evidence type="ECO:0000305" key="4"/>
<protein>
    <recommendedName>
        <fullName>Serum amyloid P-component</fullName>
        <shortName>SAP</shortName>
    </recommendedName>
</protein>
<name>SAMP_PIG</name>
<feature type="signal peptide" evidence="2">
    <location>
        <begin position="1"/>
        <end position="19"/>
    </location>
</feature>
<feature type="chain" id="PRO_0000023543" description="Serum amyloid P-component">
    <location>
        <begin position="20"/>
        <end position="224"/>
    </location>
</feature>
<feature type="domain" description="Pentraxin (PTX)" evidence="3">
    <location>
        <begin position="24"/>
        <end position="224"/>
    </location>
</feature>
<feature type="binding site" evidence="3">
    <location>
        <position position="77"/>
    </location>
    <ligand>
        <name>Ca(2+)</name>
        <dbReference type="ChEBI" id="CHEBI:29108"/>
        <label>1</label>
    </ligand>
</feature>
<feature type="binding site" evidence="3">
    <location>
        <position position="78"/>
    </location>
    <ligand>
        <name>Ca(2+)</name>
        <dbReference type="ChEBI" id="CHEBI:29108"/>
        <label>1</label>
    </ligand>
</feature>
<feature type="binding site" evidence="3">
    <location>
        <position position="155"/>
    </location>
    <ligand>
        <name>Ca(2+)</name>
        <dbReference type="ChEBI" id="CHEBI:29108"/>
        <label>1</label>
    </ligand>
</feature>
<feature type="binding site" evidence="3">
    <location>
        <position position="155"/>
    </location>
    <ligand>
        <name>Ca(2+)</name>
        <dbReference type="ChEBI" id="CHEBI:29108"/>
        <label>2</label>
    </ligand>
</feature>
<feature type="binding site" evidence="3">
    <location>
        <position position="156"/>
    </location>
    <ligand>
        <name>Ca(2+)</name>
        <dbReference type="ChEBI" id="CHEBI:29108"/>
        <label>1</label>
    </ligand>
</feature>
<feature type="binding site" evidence="3">
    <location>
        <position position="157"/>
    </location>
    <ligand>
        <name>Ca(2+)</name>
        <dbReference type="ChEBI" id="CHEBI:29108"/>
        <label>1</label>
    </ligand>
</feature>
<feature type="binding site" evidence="3">
    <location>
        <position position="157"/>
    </location>
    <ligand>
        <name>Ca(2+)</name>
        <dbReference type="ChEBI" id="CHEBI:29108"/>
        <label>2</label>
    </ligand>
</feature>
<feature type="binding site" evidence="3">
    <location>
        <position position="167"/>
    </location>
    <ligand>
        <name>Ca(2+)</name>
        <dbReference type="ChEBI" id="CHEBI:29108"/>
        <label>2</label>
    </ligand>
</feature>
<feature type="glycosylation site" description="N-linked (GlcNAc...) asparagine" evidence="2">
    <location>
        <position position="51"/>
    </location>
</feature>
<feature type="disulfide bond" evidence="3">
    <location>
        <begin position="55"/>
        <end position="114"/>
    </location>
</feature>
<keyword id="KW-0034">Amyloid</keyword>
<keyword id="KW-0106">Calcium</keyword>
<keyword id="KW-1015">Disulfide bond</keyword>
<keyword id="KW-0325">Glycoprotein</keyword>
<keyword id="KW-0430">Lectin</keyword>
<keyword id="KW-0479">Metal-binding</keyword>
<keyword id="KW-1185">Reference proteome</keyword>
<keyword id="KW-0964">Secreted</keyword>
<keyword id="KW-0732">Signal</keyword>
<gene>
    <name type="primary">APCS</name>
</gene>
<organism>
    <name type="scientific">Sus scrofa</name>
    <name type="common">Pig</name>
    <dbReference type="NCBI Taxonomy" id="9823"/>
    <lineage>
        <taxon>Eukaryota</taxon>
        <taxon>Metazoa</taxon>
        <taxon>Chordata</taxon>
        <taxon>Craniata</taxon>
        <taxon>Vertebrata</taxon>
        <taxon>Euteleostomi</taxon>
        <taxon>Mammalia</taxon>
        <taxon>Eutheria</taxon>
        <taxon>Laurasiatheria</taxon>
        <taxon>Artiodactyla</taxon>
        <taxon>Suina</taxon>
        <taxon>Suidae</taxon>
        <taxon>Sus</taxon>
    </lineage>
</organism>
<sequence length="224" mass="25641">MERLLLWVSVLASLPEAFAHRDLTGKVFVFPRESATDHVKLITKLEKPLQNFTLCFRAYSDLSRGYSLFSYNLQGKDNELLVFKHRIGEYSLYIGKTKVTFKVREVFPRPVHICTSWESSTGIAEFWINGEPLVKKGLRQGYSVGAYPRIVLGQEQDSYGGGFDKTQSFVGEIGDLYMWGSVLSPNEIRLVYQGLSFPHPTILDWQALNYEMNGYVVIKPRVWS</sequence>